<sequence>MLGIVKMEGHETTDWSNYYQDAQEGYSSVPVSNMPQGLATMNTYMTMNPMSSGSNITSGSFNMPYGNSGLGAGLSPSGMSGMGSAGAMNGMGSGVPSMGSALSPSNMNAIQSAQQASMNSLSYSSMNSGMSPMGYGATNINRTRDSKTFRRSYPHAKPPYSYISLITMAIQQAPSKMLTLSEIYQWIMDLFPYYRQNQQRWQNSIRHSLSFNDCFIKVSRSPDKPGKGSYWTLHPDSGNMFENGCYLRRQKRFKCEKTQGGKGNQDGRKDHSGPSSPLHRVHGKSSQMDSSSSMSNPSSSPQALEHNGSNGEMKPQVAAGPSPLSSHQNHSTHSLAHETHIHLKGDPHYSFNHPFSINNLMSSSEQQHKLDFKAYEQALQQYSSYGGGLQGMPLGSPSMTGRGTIEPSALEPTYYQGVYSRPVLNTS</sequence>
<reference key="1">
    <citation type="journal article" date="1993" name="Dev. Biol.">
        <title>XFKH2, a Xenopus HNF-3 alpha homologue, exhibits both activin-inducible and autonomous phases of expression in early embryos.</title>
        <authorList>
            <person name="Bolce M.E."/>
            <person name="Hemmati-Brivanlou A."/>
            <person name="Harland R.M."/>
        </authorList>
    </citation>
    <scope>NUCLEOTIDE SEQUENCE [MRNA]</scope>
    <scope>TISSUE SPECIFICITY</scope>
    <scope>DEVELOPMENTAL STAGE</scope>
    <scope>INDUCTION</scope>
    <source>
        <tissue>Embryonic tail</tissue>
    </source>
</reference>
<reference key="2">
    <citation type="journal article" date="1996" name="Int. J. Dev. Biol.">
        <title>A fork head related multigene family is transcribed in Xenopus laevis embryos.</title>
        <authorList>
            <person name="Lef J."/>
            <person name="Dege P."/>
            <person name="Scheucher M."/>
            <person name="Forsbach-Birk V."/>
            <person name="Clement J.H."/>
            <person name="Knoechel W."/>
        </authorList>
    </citation>
    <scope>NUCLEOTIDE SEQUENCE [MRNA]</scope>
    <source>
        <tissue>Gastrula</tissue>
    </source>
</reference>
<reference key="3">
    <citation type="submission" date="2003-02" db="EMBL/GenBank/DDBJ databases">
        <authorList>
            <consortium name="NIH - Xenopus Gene Collection (XGC) project"/>
        </authorList>
    </citation>
    <scope>NUCLEOTIDE SEQUENCE [LARGE SCALE MRNA]</scope>
    <source>
        <tissue>Embryo</tissue>
    </source>
</reference>
<reference key="4">
    <citation type="journal article" date="2005" name="Gene">
        <title>Of fox and frogs: fox (fork head/winged helix) transcription factors in Xenopus development.</title>
        <authorList>
            <person name="Pohl B.S."/>
            <person name="Knoechel W."/>
        </authorList>
    </citation>
    <scope>REVIEW</scope>
</reference>
<proteinExistence type="evidence at transcript level"/>
<comment type="function">
    <text>Probable transcription factor.</text>
</comment>
<comment type="subcellular location">
    <subcellularLocation>
        <location evidence="4">Nucleus</location>
    </subcellularLocation>
</comment>
<comment type="tissue specificity">
    <text evidence="3">Present in the vegetal pole and marginal zone but not the animal pole of gastrulae and in equal levels in the dorsal and ventral halves of both gastrulae and neurulae. At neurula stage, expressed in the notochord. During tailbud stages, expressed in the foregut, brain, hypocord, neural floor plate and in two lines of cells just dorsal and ventral to the notochord. Expressed in the adult liver.</text>
</comment>
<comment type="developmental stage">
    <text evidence="3">Expression begins at stage 10.25. Levels increase throughout gastrulation before reaching a peak between stages 11.5 and 12.</text>
</comment>
<comment type="induction">
    <text evidence="3">By activin.</text>
</comment>
<evidence type="ECO:0000255" key="1">
    <source>
        <dbReference type="PROSITE-ProRule" id="PRU00089"/>
    </source>
</evidence>
<evidence type="ECO:0000256" key="2">
    <source>
        <dbReference type="SAM" id="MobiDB-lite"/>
    </source>
</evidence>
<evidence type="ECO:0000269" key="3">
    <source>
    </source>
</evidence>
<evidence type="ECO:0000305" key="4"/>
<gene>
    <name type="primary">foxa1-b</name>
    <name type="synonym">fkh2</name>
</gene>
<accession>P32315</accession>
<accession>Q5D0A5</accession>
<keyword id="KW-0238">DNA-binding</keyword>
<keyword id="KW-0539">Nucleus</keyword>
<keyword id="KW-1185">Reference proteome</keyword>
<keyword id="KW-0804">Transcription</keyword>
<keyword id="KW-0805">Transcription regulation</keyword>
<name>FXA1B_XENLA</name>
<protein>
    <recommendedName>
        <fullName>Forkhead box protein A1-B</fullName>
        <shortName>FoxA1b</shortName>
    </recommendedName>
    <alternativeName>
        <fullName>Fork head domain-related protein 7'</fullName>
        <shortName>xFD-7'</shortName>
    </alternativeName>
    <alternativeName>
        <fullName>Forkhead protein 2</fullName>
        <shortName>FKH-2</shortName>
        <shortName>xFKH2</shortName>
    </alternativeName>
    <alternativeName>
        <fullName>Hepatocyte nuclear factor 3-alpha homolog B</fullName>
        <shortName>HNF3alpha homolog B</shortName>
        <shortName>xHNF3alpha-B</shortName>
    </alternativeName>
</protein>
<dbReference type="EMBL" id="M93658">
    <property type="protein sequence ID" value="AAA17050.1"/>
    <property type="molecule type" value="mRNA"/>
</dbReference>
<dbReference type="EMBL" id="BC047130">
    <property type="protein sequence ID" value="AAH47130.1"/>
    <property type="molecule type" value="mRNA"/>
</dbReference>
<dbReference type="PIR" id="I51580">
    <property type="entry name" value="I51580"/>
</dbReference>
<dbReference type="RefSeq" id="NP_001080063.1">
    <property type="nucleotide sequence ID" value="NM_001086594.1"/>
</dbReference>
<dbReference type="SMR" id="P32315"/>
<dbReference type="DNASU" id="379755"/>
<dbReference type="GeneID" id="379755"/>
<dbReference type="KEGG" id="xla:379755"/>
<dbReference type="AGR" id="Xenbase:XB-GENE-6256649"/>
<dbReference type="CTD" id="379755"/>
<dbReference type="Xenbase" id="XB-GENE-6256649">
    <property type="gene designation" value="foxa1.S"/>
</dbReference>
<dbReference type="OMA" id="CEKKMSP"/>
<dbReference type="OrthoDB" id="5954824at2759"/>
<dbReference type="Proteomes" id="UP000186698">
    <property type="component" value="Chromosome 8S"/>
</dbReference>
<dbReference type="Bgee" id="379755">
    <property type="expression patterns" value="Expressed in stomach and 13 other cell types or tissues"/>
</dbReference>
<dbReference type="GO" id="GO:0005634">
    <property type="term" value="C:nucleus"/>
    <property type="evidence" value="ECO:0000303"/>
    <property type="project" value="UniProtKB"/>
</dbReference>
<dbReference type="GO" id="GO:0003677">
    <property type="term" value="F:DNA binding"/>
    <property type="evidence" value="ECO:0000303"/>
    <property type="project" value="UniProtKB"/>
</dbReference>
<dbReference type="GO" id="GO:0003700">
    <property type="term" value="F:DNA-binding transcription factor activity"/>
    <property type="evidence" value="ECO:0000303"/>
    <property type="project" value="UniProtKB"/>
</dbReference>
<dbReference type="GO" id="GO:0000981">
    <property type="term" value="F:DNA-binding transcription factor activity, RNA polymerase II-specific"/>
    <property type="evidence" value="ECO:0000318"/>
    <property type="project" value="GO_Central"/>
</dbReference>
<dbReference type="GO" id="GO:0019904">
    <property type="term" value="F:protein domain specific binding"/>
    <property type="evidence" value="ECO:0007669"/>
    <property type="project" value="InterPro"/>
</dbReference>
<dbReference type="GO" id="GO:0000978">
    <property type="term" value="F:RNA polymerase II cis-regulatory region sequence-specific DNA binding"/>
    <property type="evidence" value="ECO:0000318"/>
    <property type="project" value="GO_Central"/>
</dbReference>
<dbReference type="GO" id="GO:0009653">
    <property type="term" value="P:anatomical structure morphogenesis"/>
    <property type="evidence" value="ECO:0000318"/>
    <property type="project" value="GO_Central"/>
</dbReference>
<dbReference type="GO" id="GO:0030154">
    <property type="term" value="P:cell differentiation"/>
    <property type="evidence" value="ECO:0000318"/>
    <property type="project" value="GO_Central"/>
</dbReference>
<dbReference type="GO" id="GO:0006355">
    <property type="term" value="P:regulation of DNA-templated transcription"/>
    <property type="evidence" value="ECO:0000303"/>
    <property type="project" value="UniProtKB"/>
</dbReference>
<dbReference type="GO" id="GO:0006357">
    <property type="term" value="P:regulation of transcription by RNA polymerase II"/>
    <property type="evidence" value="ECO:0000318"/>
    <property type="project" value="GO_Central"/>
</dbReference>
<dbReference type="CDD" id="cd20038">
    <property type="entry name" value="FH_FOXA1"/>
    <property type="match status" value="1"/>
</dbReference>
<dbReference type="FunFam" id="1.10.10.10:FF:000042">
    <property type="entry name" value="hepatocyte nuclear factor 3-beta"/>
    <property type="match status" value="1"/>
</dbReference>
<dbReference type="Gene3D" id="1.10.10.10">
    <property type="entry name" value="Winged helix-like DNA-binding domain superfamily/Winged helix DNA-binding domain"/>
    <property type="match status" value="1"/>
</dbReference>
<dbReference type="InterPro" id="IPR013638">
    <property type="entry name" value="Fork-head_N"/>
</dbReference>
<dbReference type="InterPro" id="IPR001766">
    <property type="entry name" value="Fork_head_dom"/>
</dbReference>
<dbReference type="InterPro" id="IPR018533">
    <property type="entry name" value="Forkhead_box_C"/>
</dbReference>
<dbReference type="InterPro" id="IPR050211">
    <property type="entry name" value="FOX_domain-containing"/>
</dbReference>
<dbReference type="InterPro" id="IPR018122">
    <property type="entry name" value="TF_fork_head_CS_1"/>
</dbReference>
<dbReference type="InterPro" id="IPR030456">
    <property type="entry name" value="TF_fork_head_CS_2"/>
</dbReference>
<dbReference type="InterPro" id="IPR036388">
    <property type="entry name" value="WH-like_DNA-bd_sf"/>
</dbReference>
<dbReference type="InterPro" id="IPR036390">
    <property type="entry name" value="WH_DNA-bd_sf"/>
</dbReference>
<dbReference type="PANTHER" id="PTHR11829">
    <property type="entry name" value="FORKHEAD BOX PROTEIN"/>
    <property type="match status" value="1"/>
</dbReference>
<dbReference type="PANTHER" id="PTHR11829:SF195">
    <property type="entry name" value="HEPATOCYTE NUCLEAR FACTOR 3-ALPHA"/>
    <property type="match status" value="1"/>
</dbReference>
<dbReference type="Pfam" id="PF00250">
    <property type="entry name" value="Forkhead"/>
    <property type="match status" value="1"/>
</dbReference>
<dbReference type="Pfam" id="PF08430">
    <property type="entry name" value="Forkhead_N"/>
    <property type="match status" value="1"/>
</dbReference>
<dbReference type="Pfam" id="PF09354">
    <property type="entry name" value="HNF_C"/>
    <property type="match status" value="1"/>
</dbReference>
<dbReference type="PRINTS" id="PR00053">
    <property type="entry name" value="FORKHEAD"/>
</dbReference>
<dbReference type="SMART" id="SM00339">
    <property type="entry name" value="FH"/>
    <property type="match status" value="1"/>
</dbReference>
<dbReference type="SUPFAM" id="SSF46785">
    <property type="entry name" value="Winged helix' DNA-binding domain"/>
    <property type="match status" value="1"/>
</dbReference>
<dbReference type="PROSITE" id="PS00657">
    <property type="entry name" value="FORK_HEAD_1"/>
    <property type="match status" value="1"/>
</dbReference>
<dbReference type="PROSITE" id="PS00658">
    <property type="entry name" value="FORK_HEAD_2"/>
    <property type="match status" value="1"/>
</dbReference>
<dbReference type="PROSITE" id="PS50039">
    <property type="entry name" value="FORK_HEAD_3"/>
    <property type="match status" value="1"/>
</dbReference>
<organism>
    <name type="scientific">Xenopus laevis</name>
    <name type="common">African clawed frog</name>
    <dbReference type="NCBI Taxonomy" id="8355"/>
    <lineage>
        <taxon>Eukaryota</taxon>
        <taxon>Metazoa</taxon>
        <taxon>Chordata</taxon>
        <taxon>Craniata</taxon>
        <taxon>Vertebrata</taxon>
        <taxon>Euteleostomi</taxon>
        <taxon>Amphibia</taxon>
        <taxon>Batrachia</taxon>
        <taxon>Anura</taxon>
        <taxon>Pipoidea</taxon>
        <taxon>Pipidae</taxon>
        <taxon>Xenopodinae</taxon>
        <taxon>Xenopus</taxon>
        <taxon>Xenopus</taxon>
    </lineage>
</organism>
<feature type="chain" id="PRO_0000091899" description="Forkhead box protein A1-B">
    <location>
        <begin position="1"/>
        <end position="427"/>
    </location>
</feature>
<feature type="DNA-binding region" description="Fork-head" evidence="1">
    <location>
        <begin position="157"/>
        <end position="251"/>
    </location>
</feature>
<feature type="region of interest" description="Disordered" evidence="2">
    <location>
        <begin position="256"/>
        <end position="336"/>
    </location>
</feature>
<feature type="compositionally biased region" description="Basic and acidic residues" evidence="2">
    <location>
        <begin position="256"/>
        <end position="272"/>
    </location>
</feature>
<feature type="compositionally biased region" description="Low complexity" evidence="2">
    <location>
        <begin position="285"/>
        <end position="302"/>
    </location>
</feature>
<feature type="compositionally biased region" description="Polar residues" evidence="2">
    <location>
        <begin position="323"/>
        <end position="334"/>
    </location>
</feature>